<accession>Q47WP8</accession>
<feature type="chain" id="PRO_0000231799" description="Pyridoxine 5'-phosphate synthase">
    <location>
        <begin position="1"/>
        <end position="246"/>
    </location>
</feature>
<feature type="active site" description="Proton acceptor" evidence="1">
    <location>
        <position position="45"/>
    </location>
</feature>
<feature type="active site" description="Proton acceptor" evidence="1">
    <location>
        <position position="72"/>
    </location>
</feature>
<feature type="active site" description="Proton donor" evidence="1">
    <location>
        <position position="193"/>
    </location>
</feature>
<feature type="binding site" evidence="1">
    <location>
        <position position="9"/>
    </location>
    <ligand>
        <name>3-amino-2-oxopropyl phosphate</name>
        <dbReference type="ChEBI" id="CHEBI:57279"/>
    </ligand>
</feature>
<feature type="binding site" evidence="1">
    <location>
        <begin position="11"/>
        <end position="12"/>
    </location>
    <ligand>
        <name>1-deoxy-D-xylulose 5-phosphate</name>
        <dbReference type="ChEBI" id="CHEBI:57792"/>
    </ligand>
</feature>
<feature type="binding site" evidence="1">
    <location>
        <position position="20"/>
    </location>
    <ligand>
        <name>3-amino-2-oxopropyl phosphate</name>
        <dbReference type="ChEBI" id="CHEBI:57279"/>
    </ligand>
</feature>
<feature type="binding site" evidence="1">
    <location>
        <position position="47"/>
    </location>
    <ligand>
        <name>1-deoxy-D-xylulose 5-phosphate</name>
        <dbReference type="ChEBI" id="CHEBI:57792"/>
    </ligand>
</feature>
<feature type="binding site" evidence="1">
    <location>
        <position position="52"/>
    </location>
    <ligand>
        <name>1-deoxy-D-xylulose 5-phosphate</name>
        <dbReference type="ChEBI" id="CHEBI:57792"/>
    </ligand>
</feature>
<feature type="binding site" evidence="1">
    <location>
        <position position="102"/>
    </location>
    <ligand>
        <name>1-deoxy-D-xylulose 5-phosphate</name>
        <dbReference type="ChEBI" id="CHEBI:57792"/>
    </ligand>
</feature>
<feature type="binding site" evidence="1">
    <location>
        <position position="194"/>
    </location>
    <ligand>
        <name>3-amino-2-oxopropyl phosphate</name>
        <dbReference type="ChEBI" id="CHEBI:57279"/>
    </ligand>
</feature>
<feature type="binding site" evidence="1">
    <location>
        <begin position="215"/>
        <end position="216"/>
    </location>
    <ligand>
        <name>3-amino-2-oxopropyl phosphate</name>
        <dbReference type="ChEBI" id="CHEBI:57279"/>
    </ligand>
</feature>
<feature type="site" description="Transition state stabilizer" evidence="1">
    <location>
        <position position="153"/>
    </location>
</feature>
<gene>
    <name evidence="1" type="primary">pdxJ</name>
    <name type="ordered locus">CPS_4119</name>
</gene>
<comment type="function">
    <text evidence="1">Catalyzes the complicated ring closure reaction between the two acyclic compounds 1-deoxy-D-xylulose-5-phosphate (DXP) and 3-amino-2-oxopropyl phosphate (1-amino-acetone-3-phosphate or AAP) to form pyridoxine 5'-phosphate (PNP) and inorganic phosphate.</text>
</comment>
<comment type="catalytic activity">
    <reaction evidence="1">
        <text>3-amino-2-oxopropyl phosphate + 1-deoxy-D-xylulose 5-phosphate = pyridoxine 5'-phosphate + phosphate + 2 H2O + H(+)</text>
        <dbReference type="Rhea" id="RHEA:15265"/>
        <dbReference type="ChEBI" id="CHEBI:15377"/>
        <dbReference type="ChEBI" id="CHEBI:15378"/>
        <dbReference type="ChEBI" id="CHEBI:43474"/>
        <dbReference type="ChEBI" id="CHEBI:57279"/>
        <dbReference type="ChEBI" id="CHEBI:57792"/>
        <dbReference type="ChEBI" id="CHEBI:58589"/>
        <dbReference type="EC" id="2.6.99.2"/>
    </reaction>
</comment>
<comment type="pathway">
    <text evidence="1">Cofactor biosynthesis; pyridoxine 5'-phosphate biosynthesis; pyridoxine 5'-phosphate from D-erythrose 4-phosphate: step 5/5.</text>
</comment>
<comment type="subunit">
    <text evidence="1">Homooctamer; tetramer of dimers.</text>
</comment>
<comment type="subcellular location">
    <subcellularLocation>
        <location evidence="1">Cytoplasm</location>
    </subcellularLocation>
</comment>
<comment type="similarity">
    <text evidence="1">Belongs to the PNP synthase family.</text>
</comment>
<reference key="1">
    <citation type="journal article" date="2005" name="Proc. Natl. Acad. Sci. U.S.A.">
        <title>The psychrophilic lifestyle as revealed by the genome sequence of Colwellia psychrerythraea 34H through genomic and proteomic analyses.</title>
        <authorList>
            <person name="Methe B.A."/>
            <person name="Nelson K.E."/>
            <person name="Deming J.W."/>
            <person name="Momen B."/>
            <person name="Melamud E."/>
            <person name="Zhang X."/>
            <person name="Moult J."/>
            <person name="Madupu R."/>
            <person name="Nelson W.C."/>
            <person name="Dodson R.J."/>
            <person name="Brinkac L.M."/>
            <person name="Daugherty S.C."/>
            <person name="Durkin A.S."/>
            <person name="DeBoy R.T."/>
            <person name="Kolonay J.F."/>
            <person name="Sullivan S.A."/>
            <person name="Zhou L."/>
            <person name="Davidsen T.M."/>
            <person name="Wu M."/>
            <person name="Huston A.L."/>
            <person name="Lewis M."/>
            <person name="Weaver B."/>
            <person name="Weidman J.F."/>
            <person name="Khouri H."/>
            <person name="Utterback T.R."/>
            <person name="Feldblyum T.V."/>
            <person name="Fraser C.M."/>
        </authorList>
    </citation>
    <scope>NUCLEOTIDE SEQUENCE [LARGE SCALE GENOMIC DNA]</scope>
    <source>
        <strain>34H / ATCC BAA-681</strain>
    </source>
</reference>
<organism>
    <name type="scientific">Colwellia psychrerythraea (strain 34H / ATCC BAA-681)</name>
    <name type="common">Vibrio psychroerythus</name>
    <dbReference type="NCBI Taxonomy" id="167879"/>
    <lineage>
        <taxon>Bacteria</taxon>
        <taxon>Pseudomonadati</taxon>
        <taxon>Pseudomonadota</taxon>
        <taxon>Gammaproteobacteria</taxon>
        <taxon>Alteromonadales</taxon>
        <taxon>Colwelliaceae</taxon>
        <taxon>Colwellia</taxon>
    </lineage>
</organism>
<name>PDXJ_COLP3</name>
<evidence type="ECO:0000255" key="1">
    <source>
        <dbReference type="HAMAP-Rule" id="MF_00279"/>
    </source>
</evidence>
<proteinExistence type="inferred from homology"/>
<sequence>MSELLLGVNVDHIATLRQARGTNYPDPVYAASVAEHAGADGITVHLREDRRHIQDRDIHVLKQTLHTRMNFEMAVTDEMIAIACDVKPVFCCLVPEKREELTTEGGLDVVGQLDKITKATEQLTAAGIAVSLFIDADKAQIDAAVASKAPYIEIHTGHYADLSSEEEQLIELERLTVGIKYAHNLGLKVNAGHGLNYFNVKPIAAIKEIIELNIGHAIIARAAIDGLDKAVRDMKQLMLEARTYNT</sequence>
<keyword id="KW-0963">Cytoplasm</keyword>
<keyword id="KW-0664">Pyridoxine biosynthesis</keyword>
<keyword id="KW-0808">Transferase</keyword>
<protein>
    <recommendedName>
        <fullName evidence="1">Pyridoxine 5'-phosphate synthase</fullName>
        <shortName evidence="1">PNP synthase</shortName>
        <ecNumber evidence="1">2.6.99.2</ecNumber>
    </recommendedName>
</protein>
<dbReference type="EC" id="2.6.99.2" evidence="1"/>
<dbReference type="EMBL" id="CP000083">
    <property type="protein sequence ID" value="AAZ25393.1"/>
    <property type="molecule type" value="Genomic_DNA"/>
</dbReference>
<dbReference type="RefSeq" id="WP_011044855.1">
    <property type="nucleotide sequence ID" value="NC_003910.7"/>
</dbReference>
<dbReference type="SMR" id="Q47WP8"/>
<dbReference type="STRING" id="167879.CPS_4119"/>
<dbReference type="KEGG" id="cps:CPS_4119"/>
<dbReference type="eggNOG" id="COG0854">
    <property type="taxonomic scope" value="Bacteria"/>
</dbReference>
<dbReference type="HOGENOM" id="CLU_074563_0_0_6"/>
<dbReference type="UniPathway" id="UPA00244">
    <property type="reaction ID" value="UER00313"/>
</dbReference>
<dbReference type="Proteomes" id="UP000000547">
    <property type="component" value="Chromosome"/>
</dbReference>
<dbReference type="GO" id="GO:0005829">
    <property type="term" value="C:cytosol"/>
    <property type="evidence" value="ECO:0007669"/>
    <property type="project" value="TreeGrafter"/>
</dbReference>
<dbReference type="GO" id="GO:0033856">
    <property type="term" value="F:pyridoxine 5'-phosphate synthase activity"/>
    <property type="evidence" value="ECO:0007669"/>
    <property type="project" value="UniProtKB-EC"/>
</dbReference>
<dbReference type="GO" id="GO:0008615">
    <property type="term" value="P:pyridoxine biosynthetic process"/>
    <property type="evidence" value="ECO:0007669"/>
    <property type="project" value="UniProtKB-UniRule"/>
</dbReference>
<dbReference type="CDD" id="cd00003">
    <property type="entry name" value="PNPsynthase"/>
    <property type="match status" value="1"/>
</dbReference>
<dbReference type="FunFam" id="3.20.20.70:FF:000042">
    <property type="entry name" value="Pyridoxine 5'-phosphate synthase"/>
    <property type="match status" value="1"/>
</dbReference>
<dbReference type="Gene3D" id="3.20.20.70">
    <property type="entry name" value="Aldolase class I"/>
    <property type="match status" value="1"/>
</dbReference>
<dbReference type="HAMAP" id="MF_00279">
    <property type="entry name" value="PdxJ"/>
    <property type="match status" value="1"/>
</dbReference>
<dbReference type="InterPro" id="IPR013785">
    <property type="entry name" value="Aldolase_TIM"/>
</dbReference>
<dbReference type="InterPro" id="IPR004569">
    <property type="entry name" value="PyrdxlP_synth_PdxJ"/>
</dbReference>
<dbReference type="InterPro" id="IPR036130">
    <property type="entry name" value="Pyridoxine-5'_phos_synth"/>
</dbReference>
<dbReference type="NCBIfam" id="TIGR00559">
    <property type="entry name" value="pdxJ"/>
    <property type="match status" value="1"/>
</dbReference>
<dbReference type="NCBIfam" id="NF003623">
    <property type="entry name" value="PRK05265.1-1"/>
    <property type="match status" value="1"/>
</dbReference>
<dbReference type="NCBIfam" id="NF003624">
    <property type="entry name" value="PRK05265.1-2"/>
    <property type="match status" value="1"/>
</dbReference>
<dbReference type="NCBIfam" id="NF003625">
    <property type="entry name" value="PRK05265.1-3"/>
    <property type="match status" value="1"/>
</dbReference>
<dbReference type="NCBIfam" id="NF003627">
    <property type="entry name" value="PRK05265.1-5"/>
    <property type="match status" value="1"/>
</dbReference>
<dbReference type="PANTHER" id="PTHR30456">
    <property type="entry name" value="PYRIDOXINE 5'-PHOSPHATE SYNTHASE"/>
    <property type="match status" value="1"/>
</dbReference>
<dbReference type="PANTHER" id="PTHR30456:SF0">
    <property type="entry name" value="PYRIDOXINE 5'-PHOSPHATE SYNTHASE"/>
    <property type="match status" value="1"/>
</dbReference>
<dbReference type="Pfam" id="PF03740">
    <property type="entry name" value="PdxJ"/>
    <property type="match status" value="1"/>
</dbReference>
<dbReference type="SUPFAM" id="SSF63892">
    <property type="entry name" value="Pyridoxine 5'-phosphate synthase"/>
    <property type="match status" value="1"/>
</dbReference>